<accession>Q5XHY8</accession>
<sequence length="419" mass="47054">MGRKSNESCSANPHSSSISQENLSQWNLDAEDLFDENESFLSEKDGVAGGKTNKNHLESPAEQLVLQLTVSEHAHSRSQNNNQGVFQLWSSPVNKGSIIDKRNSSVEENVTDESDLSESEKMNDSLLSYFKKMDLNLKPETIEHVERAFTEEANQVSVYADFLPAPFNTMDLHRFAFSKCESWKTTVDPPESSIERLIMRLLELERLQHMTIQRERPKLQSTFCSSMFSMAERPSSSKAITLKARPPKIPETPTLQTSSVDKNRDKRKNNSGSGKPEQNVPKWSLSTAGKSKSNSRSLLKCSSTSKQCAMAHDDVKNPKNSILNPCQDPPPKPTTTTQAIQPMIKVVSTRCLPPRSPMPVSPIPLSFPENPREEVKVPRTKKKCHRKSILQNRPFHVQKRNCLSPSLIARGKCSPTDQK</sequence>
<proteinExistence type="evidence at transcript level"/>
<organism>
    <name type="scientific">Rattus norvegicus</name>
    <name type="common">Rat</name>
    <dbReference type="NCBI Taxonomy" id="10116"/>
    <lineage>
        <taxon>Eukaryota</taxon>
        <taxon>Metazoa</taxon>
        <taxon>Chordata</taxon>
        <taxon>Craniata</taxon>
        <taxon>Vertebrata</taxon>
        <taxon>Euteleostomi</taxon>
        <taxon>Mammalia</taxon>
        <taxon>Eutheria</taxon>
        <taxon>Euarchontoglires</taxon>
        <taxon>Glires</taxon>
        <taxon>Rodentia</taxon>
        <taxon>Myomorpha</taxon>
        <taxon>Muroidea</taxon>
        <taxon>Muridae</taxon>
        <taxon>Murinae</taxon>
        <taxon>Rattus</taxon>
    </lineage>
</organism>
<evidence type="ECO:0000256" key="1">
    <source>
        <dbReference type="SAM" id="MobiDB-lite"/>
    </source>
</evidence>
<evidence type="ECO:0000305" key="2"/>
<gene>
    <name type="primary">Fam217a</name>
</gene>
<keyword id="KW-1185">Reference proteome</keyword>
<reference key="1">
    <citation type="journal article" date="2004" name="Genome Res.">
        <title>The status, quality, and expansion of the NIH full-length cDNA project: the Mammalian Gene Collection (MGC).</title>
        <authorList>
            <consortium name="The MGC Project Team"/>
        </authorList>
    </citation>
    <scope>NUCLEOTIDE SEQUENCE [LARGE SCALE MRNA]</scope>
    <source>
        <tissue>Testis</tissue>
    </source>
</reference>
<dbReference type="EMBL" id="BC083911">
    <property type="protein sequence ID" value="AAH83911.1"/>
    <property type="status" value="ALT_INIT"/>
    <property type="molecule type" value="mRNA"/>
</dbReference>
<dbReference type="RefSeq" id="NP_001258012.1">
    <property type="nucleotide sequence ID" value="NM_001271083.1"/>
</dbReference>
<dbReference type="FunCoup" id="Q5XHY8">
    <property type="interactions" value="2"/>
</dbReference>
<dbReference type="PhosphoSitePlus" id="Q5XHY8"/>
<dbReference type="PaxDb" id="10116-ENSRNOP00000022368"/>
<dbReference type="GeneID" id="498735"/>
<dbReference type="KEGG" id="rno:498735"/>
<dbReference type="UCSC" id="RGD:1566214">
    <property type="organism name" value="rat"/>
</dbReference>
<dbReference type="AGR" id="RGD:1566214"/>
<dbReference type="CTD" id="222826"/>
<dbReference type="RGD" id="1566214">
    <property type="gene designation" value="Fam217a"/>
</dbReference>
<dbReference type="eggNOG" id="ENOG502SAD6">
    <property type="taxonomic scope" value="Eukaryota"/>
</dbReference>
<dbReference type="InParanoid" id="Q5XHY8"/>
<dbReference type="OrthoDB" id="90660at9989"/>
<dbReference type="PhylomeDB" id="Q5XHY8"/>
<dbReference type="PRO" id="PR:Q5XHY8"/>
<dbReference type="Proteomes" id="UP000002494">
    <property type="component" value="Unplaced"/>
</dbReference>
<dbReference type="InterPro" id="IPR029266">
    <property type="entry name" value="FAM217"/>
</dbReference>
<dbReference type="PANTHER" id="PTHR22145:SF4">
    <property type="entry name" value="PROTEIN FAM217A"/>
    <property type="match status" value="1"/>
</dbReference>
<dbReference type="PANTHER" id="PTHR22145">
    <property type="entry name" value="SI:CH211-266K22.6"/>
    <property type="match status" value="1"/>
</dbReference>
<dbReference type="Pfam" id="PF15344">
    <property type="entry name" value="FAM217"/>
    <property type="match status" value="1"/>
</dbReference>
<protein>
    <recommendedName>
        <fullName>Protein FAM217A</fullName>
    </recommendedName>
</protein>
<feature type="chain" id="PRO_0000089542" description="Protein FAM217A">
    <location>
        <begin position="1"/>
        <end position="419"/>
    </location>
</feature>
<feature type="region of interest" description="Disordered" evidence="1">
    <location>
        <begin position="1"/>
        <end position="23"/>
    </location>
</feature>
<feature type="region of interest" description="Disordered" evidence="1">
    <location>
        <begin position="100"/>
        <end position="119"/>
    </location>
</feature>
<feature type="region of interest" description="Disordered" evidence="1">
    <location>
        <begin position="234"/>
        <end position="298"/>
    </location>
</feature>
<feature type="region of interest" description="Disordered" evidence="1">
    <location>
        <begin position="362"/>
        <end position="388"/>
    </location>
</feature>
<feature type="compositionally biased region" description="Polar residues" evidence="1">
    <location>
        <begin position="7"/>
        <end position="23"/>
    </location>
</feature>
<feature type="compositionally biased region" description="Polar residues" evidence="1">
    <location>
        <begin position="284"/>
        <end position="298"/>
    </location>
</feature>
<feature type="compositionally biased region" description="Basic residues" evidence="1">
    <location>
        <begin position="378"/>
        <end position="388"/>
    </location>
</feature>
<comment type="similarity">
    <text evidence="2">Belongs to the FAM217 family.</text>
</comment>
<comment type="sequence caution" evidence="2">
    <conflict type="erroneous initiation">
        <sequence resource="EMBL-CDS" id="AAH83911"/>
    </conflict>
</comment>
<name>F217A_RAT</name>